<evidence type="ECO:0000255" key="1">
    <source>
        <dbReference type="HAMAP-Rule" id="MF_01834"/>
    </source>
</evidence>
<evidence type="ECO:0007829" key="2">
    <source>
        <dbReference type="PDB" id="1R0V"/>
    </source>
</evidence>
<evidence type="ECO:0007829" key="3">
    <source>
        <dbReference type="PDB" id="2GJW"/>
    </source>
</evidence>
<evidence type="ECO:0007829" key="4">
    <source>
        <dbReference type="PDB" id="3P1Y"/>
    </source>
</evidence>
<comment type="function">
    <text>Endonuclease that removes tRNA introns. Cleaves pre-tRNA at the 5'- and 3'-splice sites to release the intron. The products are an intron and two tRNA half-molecules bearing 2',3' cyclic phosphate and 5'-OH termini. Recognizes a pseudosymmetric substrate in which 2 bulged loops of 3 bases are separated by a stem of 4 bp.</text>
</comment>
<comment type="catalytic activity">
    <reaction evidence="1">
        <text>pretRNA = a 3'-half-tRNA molecule with a 5'-OH end + a 5'-half-tRNA molecule with a 2',3'-cyclic phosphate end + an intron with a 2',3'-cyclic phosphate and a 5'-hydroxyl terminus.</text>
        <dbReference type="EC" id="4.6.1.16"/>
    </reaction>
</comment>
<comment type="subunit">
    <text>Homodimer.</text>
</comment>
<comment type="similarity">
    <text evidence="1">Belongs to the tRNA-intron endonuclease family. Archaeal long subfamily.</text>
</comment>
<gene>
    <name evidence="1" type="primary">endA</name>
    <name type="ordered locus">AF_0900</name>
</gene>
<keyword id="KW-0002">3D-structure</keyword>
<keyword id="KW-0456">Lyase</keyword>
<keyword id="KW-1185">Reference proteome</keyword>
<keyword id="KW-0819">tRNA processing</keyword>
<name>ENDA_ARCFU</name>
<reference key="1">
    <citation type="journal article" date="1997" name="Nature">
        <title>The complete genome sequence of the hyperthermophilic, sulphate-reducing archaeon Archaeoglobus fulgidus.</title>
        <authorList>
            <person name="Klenk H.-P."/>
            <person name="Clayton R.A."/>
            <person name="Tomb J.-F."/>
            <person name="White O."/>
            <person name="Nelson K.E."/>
            <person name="Ketchum K.A."/>
            <person name="Dodson R.J."/>
            <person name="Gwinn M.L."/>
            <person name="Hickey E.K."/>
            <person name="Peterson J.D."/>
            <person name="Richardson D.L."/>
            <person name="Kerlavage A.R."/>
            <person name="Graham D.E."/>
            <person name="Kyrpides N.C."/>
            <person name="Fleischmann R.D."/>
            <person name="Quackenbush J."/>
            <person name="Lee N.H."/>
            <person name="Sutton G.G."/>
            <person name="Gill S.R."/>
            <person name="Kirkness E.F."/>
            <person name="Dougherty B.A."/>
            <person name="McKenney K."/>
            <person name="Adams M.D."/>
            <person name="Loftus B.J."/>
            <person name="Peterson S.N."/>
            <person name="Reich C.I."/>
            <person name="McNeil L.K."/>
            <person name="Badger J.H."/>
            <person name="Glodek A."/>
            <person name="Zhou L."/>
            <person name="Overbeek R."/>
            <person name="Gocayne J.D."/>
            <person name="Weidman J.F."/>
            <person name="McDonald L.A."/>
            <person name="Utterback T.R."/>
            <person name="Cotton M.D."/>
            <person name="Spriggs T."/>
            <person name="Artiach P."/>
            <person name="Kaine B.P."/>
            <person name="Sykes S.M."/>
            <person name="Sadow P.W."/>
            <person name="D'Andrea K.P."/>
            <person name="Bowman C."/>
            <person name="Fujii C."/>
            <person name="Garland S.A."/>
            <person name="Mason T.M."/>
            <person name="Olsen G.J."/>
            <person name="Fraser C.M."/>
            <person name="Smith H.O."/>
            <person name="Woese C.R."/>
            <person name="Venter J.C."/>
        </authorList>
    </citation>
    <scope>NUCLEOTIDE SEQUENCE [LARGE SCALE GENOMIC DNA]</scope>
    <source>
        <strain>ATCC 49558 / DSM 4304 / JCM 9628 / NBRC 100126 / VC-16</strain>
    </source>
</reference>
<reference key="2">
    <citation type="journal article" date="2000" name="J. Mol. Biol.">
        <title>Crystal structure of a dimeric archaeal splicing endonuclease.</title>
        <authorList>
            <person name="Li H."/>
            <person name="Abelson J."/>
        </authorList>
    </citation>
    <scope>X-RAY CRYSTALLOGRAPHY (2.8 ANGSTROMS)</scope>
</reference>
<protein>
    <recommendedName>
        <fullName evidence="1">tRNA-splicing endonuclease</fullName>
        <ecNumber evidence="1">4.6.1.16</ecNumber>
    </recommendedName>
    <alternativeName>
        <fullName evidence="1">tRNA-intron endonuclease</fullName>
    </alternativeName>
</protein>
<accession>O29362</accession>
<organism>
    <name type="scientific">Archaeoglobus fulgidus (strain ATCC 49558 / DSM 4304 / JCM 9628 / NBRC 100126 / VC-16)</name>
    <dbReference type="NCBI Taxonomy" id="224325"/>
    <lineage>
        <taxon>Archaea</taxon>
        <taxon>Methanobacteriati</taxon>
        <taxon>Methanobacteriota</taxon>
        <taxon>Archaeoglobi</taxon>
        <taxon>Archaeoglobales</taxon>
        <taxon>Archaeoglobaceae</taxon>
        <taxon>Archaeoglobus</taxon>
    </lineage>
</organism>
<sequence length="305" mass="35959">MIGGDFAVVKAKKSLERRGFGVKRGDKIYLHPLEVVYLQIKGIESFGELEDVLSWAESRMEDFSTYYFVYEDLRDRGNKVKIQGEFLLTKKPYLPISERKTIRMEEIAEKARNFDELRLAVVDEESEITYFRVYEPDMMGEQKEELPEIAGILSDEYVITKQTEIFSRYFYGSEKGDLVTLSLIESLYLLDLGKLNLLNADREELVKRAREVERNFDRRYEVYRNLKERGFVVKTGFKFGSEFRVYRKVESVDDLPHSEYLVDIADSREIRLIDLARAVRLAQNVRKRMVFAYGKNYLCFERVKV</sequence>
<feature type="chain" id="PRO_0000109484" description="tRNA-splicing endonuclease">
    <location>
        <begin position="1"/>
        <end position="305"/>
    </location>
</feature>
<feature type="active site" evidence="1">
    <location>
        <position position="246"/>
    </location>
</feature>
<feature type="active site" evidence="1">
    <location>
        <position position="257"/>
    </location>
</feature>
<feature type="active site" evidence="1">
    <location>
        <position position="287"/>
    </location>
</feature>
<feature type="strand" evidence="4">
    <location>
        <begin position="4"/>
        <end position="10"/>
    </location>
</feature>
<feature type="helix" evidence="4">
    <location>
        <begin position="13"/>
        <end position="18"/>
    </location>
</feature>
<feature type="strand" evidence="4">
    <location>
        <begin position="21"/>
        <end position="24"/>
    </location>
</feature>
<feature type="strand" evidence="4">
    <location>
        <begin position="27"/>
        <end position="30"/>
    </location>
</feature>
<feature type="helix" evidence="4">
    <location>
        <begin position="32"/>
        <end position="40"/>
    </location>
</feature>
<feature type="helix" evidence="4">
    <location>
        <begin position="49"/>
        <end position="59"/>
    </location>
</feature>
<feature type="strand" evidence="3">
    <location>
        <begin position="60"/>
        <end position="62"/>
    </location>
</feature>
<feature type="helix" evidence="2">
    <location>
        <begin position="63"/>
        <end position="75"/>
    </location>
</feature>
<feature type="strand" evidence="2">
    <location>
        <begin position="81"/>
        <end position="83"/>
    </location>
</feature>
<feature type="strand" evidence="2">
    <location>
        <begin position="86"/>
        <end position="97"/>
    </location>
</feature>
<feature type="helix" evidence="2">
    <location>
        <begin position="104"/>
        <end position="110"/>
    </location>
</feature>
<feature type="turn" evidence="2">
    <location>
        <begin position="111"/>
        <end position="113"/>
    </location>
</feature>
<feature type="strand" evidence="2">
    <location>
        <begin position="118"/>
        <end position="122"/>
    </location>
</feature>
<feature type="strand" evidence="2">
    <location>
        <begin position="128"/>
        <end position="134"/>
    </location>
</feature>
<feature type="strand" evidence="2">
    <location>
        <begin position="149"/>
        <end position="154"/>
    </location>
</feature>
<feature type="strand" evidence="2">
    <location>
        <begin position="157"/>
        <end position="161"/>
    </location>
</feature>
<feature type="helix" evidence="2">
    <location>
        <begin position="164"/>
        <end position="167"/>
    </location>
</feature>
<feature type="strand" evidence="2">
    <location>
        <begin position="172"/>
        <end position="175"/>
    </location>
</feature>
<feature type="strand" evidence="2">
    <location>
        <begin position="178"/>
        <end position="181"/>
    </location>
</feature>
<feature type="helix" evidence="2">
    <location>
        <begin position="183"/>
        <end position="191"/>
    </location>
</feature>
<feature type="strand" evidence="2">
    <location>
        <begin position="195"/>
        <end position="197"/>
    </location>
</feature>
<feature type="helix" evidence="2">
    <location>
        <begin position="202"/>
        <end position="212"/>
    </location>
</feature>
<feature type="helix" evidence="2">
    <location>
        <begin position="216"/>
        <end position="228"/>
    </location>
</feature>
<feature type="strand" evidence="2">
    <location>
        <begin position="232"/>
        <end position="235"/>
    </location>
</feature>
<feature type="helix" evidence="2">
    <location>
        <begin position="237"/>
        <end position="239"/>
    </location>
</feature>
<feature type="strand" evidence="2">
    <location>
        <begin position="241"/>
        <end position="247"/>
    </location>
</feature>
<feature type="helix" evidence="2">
    <location>
        <begin position="252"/>
        <end position="257"/>
    </location>
</feature>
<feature type="strand" evidence="2">
    <location>
        <begin position="259"/>
        <end position="264"/>
    </location>
</feature>
<feature type="helix" evidence="2">
    <location>
        <begin position="272"/>
        <end position="284"/>
    </location>
</feature>
<feature type="strand" evidence="2">
    <location>
        <begin position="288"/>
        <end position="293"/>
    </location>
</feature>
<feature type="strand" evidence="2">
    <location>
        <begin position="296"/>
        <end position="303"/>
    </location>
</feature>
<proteinExistence type="evidence at protein level"/>
<dbReference type="EC" id="4.6.1.16" evidence="1"/>
<dbReference type="EMBL" id="AE000782">
    <property type="protein sequence ID" value="AAB90338.1"/>
    <property type="molecule type" value="Genomic_DNA"/>
</dbReference>
<dbReference type="PIR" id="D69362">
    <property type="entry name" value="D69362"/>
</dbReference>
<dbReference type="RefSeq" id="WP_010878400.1">
    <property type="nucleotide sequence ID" value="NC_000917.1"/>
</dbReference>
<dbReference type="PDB" id="1R0V">
    <property type="method" value="X-ray"/>
    <property type="resolution" value="2.00 A"/>
    <property type="chains" value="A/B/C/D=1-305"/>
</dbReference>
<dbReference type="PDB" id="1R11">
    <property type="method" value="X-ray"/>
    <property type="resolution" value="2.70 A"/>
    <property type="chains" value="A/B=1-305"/>
</dbReference>
<dbReference type="PDB" id="1RLV">
    <property type="method" value="X-ray"/>
    <property type="resolution" value="3.00 A"/>
    <property type="chains" value="A/B=1-305"/>
</dbReference>
<dbReference type="PDB" id="2GJW">
    <property type="method" value="X-ray"/>
    <property type="resolution" value="2.85 A"/>
    <property type="chains" value="A/B/C/D=2-305"/>
</dbReference>
<dbReference type="PDB" id="3P1Y">
    <property type="method" value="X-ray"/>
    <property type="resolution" value="2.05 A"/>
    <property type="chains" value="A/B/C/D=1-305"/>
</dbReference>
<dbReference type="PDBsum" id="1R0V"/>
<dbReference type="PDBsum" id="1R11"/>
<dbReference type="PDBsum" id="1RLV"/>
<dbReference type="PDBsum" id="2GJW"/>
<dbReference type="PDBsum" id="3P1Y"/>
<dbReference type="SMR" id="O29362"/>
<dbReference type="STRING" id="224325.AF_0900"/>
<dbReference type="PaxDb" id="224325-AF_0900"/>
<dbReference type="EnsemblBacteria" id="AAB90338">
    <property type="protein sequence ID" value="AAB90338"/>
    <property type="gene ID" value="AF_0900"/>
</dbReference>
<dbReference type="GeneID" id="1484123"/>
<dbReference type="KEGG" id="afu:AF_0900"/>
<dbReference type="eggNOG" id="arCOG01701">
    <property type="taxonomic scope" value="Archaea"/>
</dbReference>
<dbReference type="HOGENOM" id="CLU_791347_0_0_2"/>
<dbReference type="PhylomeDB" id="O29362"/>
<dbReference type="BRENDA" id="4.6.1.16">
    <property type="organism ID" value="414"/>
</dbReference>
<dbReference type="EvolutionaryTrace" id="O29362"/>
<dbReference type="Proteomes" id="UP000002199">
    <property type="component" value="Chromosome"/>
</dbReference>
<dbReference type="GO" id="GO:0005737">
    <property type="term" value="C:cytoplasm"/>
    <property type="evidence" value="ECO:0007669"/>
    <property type="project" value="TreeGrafter"/>
</dbReference>
<dbReference type="GO" id="GO:0016829">
    <property type="term" value="F:lyase activity"/>
    <property type="evidence" value="ECO:0007669"/>
    <property type="project" value="UniProtKB-KW"/>
</dbReference>
<dbReference type="GO" id="GO:0003676">
    <property type="term" value="F:nucleic acid binding"/>
    <property type="evidence" value="ECO:0007669"/>
    <property type="project" value="InterPro"/>
</dbReference>
<dbReference type="GO" id="GO:0000213">
    <property type="term" value="F:tRNA-intron endonuclease activity"/>
    <property type="evidence" value="ECO:0007669"/>
    <property type="project" value="UniProtKB-UniRule"/>
</dbReference>
<dbReference type="GO" id="GO:0006388">
    <property type="term" value="P:tRNA splicing, via endonucleolytic cleavage and ligation"/>
    <property type="evidence" value="ECO:0007669"/>
    <property type="project" value="UniProtKB-UniRule"/>
</dbReference>
<dbReference type="CDD" id="cd22363">
    <property type="entry name" value="tRNA-intron_lyase_C"/>
    <property type="match status" value="1"/>
</dbReference>
<dbReference type="Gene3D" id="3.40.1350.10">
    <property type="match status" value="1"/>
</dbReference>
<dbReference type="Gene3D" id="3.40.1350.150">
    <property type="match status" value="1"/>
</dbReference>
<dbReference type="Gene3D" id="3.40.1170.20">
    <property type="entry name" value="tRNA intron endonuclease, N-terminal domain"/>
    <property type="match status" value="1"/>
</dbReference>
<dbReference type="HAMAP" id="MF_01834">
    <property type="entry name" value="EndA_long"/>
    <property type="match status" value="1"/>
</dbReference>
<dbReference type="InterPro" id="IPR011856">
    <property type="entry name" value="tRNA_endonuc-like_dom_sf"/>
</dbReference>
<dbReference type="InterPro" id="IPR036167">
    <property type="entry name" value="tRNA_intron_Endo_cat-like_sf"/>
</dbReference>
<dbReference type="InterPro" id="IPR006677">
    <property type="entry name" value="tRNA_intron_Endonuc_cat-like"/>
</dbReference>
<dbReference type="InterPro" id="IPR006678">
    <property type="entry name" value="tRNA_intron_Endonuc_N"/>
</dbReference>
<dbReference type="InterPro" id="IPR036740">
    <property type="entry name" value="tRNA_intron_Endonuc_N_sf"/>
</dbReference>
<dbReference type="InterPro" id="IPR006676">
    <property type="entry name" value="tRNA_splic"/>
</dbReference>
<dbReference type="InterPro" id="IPR023516">
    <property type="entry name" value="tRNA_splic_arch_long"/>
</dbReference>
<dbReference type="NCBIfam" id="TIGR00324">
    <property type="entry name" value="endA"/>
    <property type="match status" value="1"/>
</dbReference>
<dbReference type="PANTHER" id="PTHR21227">
    <property type="entry name" value="TRNA-SPLICING ENDONUCLEASE SUBUNIT SEN2"/>
    <property type="match status" value="1"/>
</dbReference>
<dbReference type="PANTHER" id="PTHR21227:SF0">
    <property type="entry name" value="TRNA-SPLICING ENDONUCLEASE SUBUNIT SEN2"/>
    <property type="match status" value="1"/>
</dbReference>
<dbReference type="Pfam" id="PF01974">
    <property type="entry name" value="tRNA_int_endo"/>
    <property type="match status" value="1"/>
</dbReference>
<dbReference type="Pfam" id="PF02778">
    <property type="entry name" value="tRNA_int_endo_N"/>
    <property type="match status" value="1"/>
</dbReference>
<dbReference type="SUPFAM" id="SSF53032">
    <property type="entry name" value="tRNA-intron endonuclease catalytic domain-like"/>
    <property type="match status" value="2"/>
</dbReference>
<dbReference type="SUPFAM" id="SSF55267">
    <property type="entry name" value="tRNA-intron endonuclease N-terminal domain-like"/>
    <property type="match status" value="2"/>
</dbReference>